<keyword id="KW-0002">3D-structure</keyword>
<keyword id="KW-0007">Acetylation</keyword>
<keyword id="KW-0963">Cytoplasm</keyword>
<keyword id="KW-0945">Host-virus interaction</keyword>
<keyword id="KW-0539">Nucleus</keyword>
<keyword id="KW-0597">Phosphoprotein</keyword>
<keyword id="KW-0653">Protein transport</keyword>
<keyword id="KW-1267">Proteomics identification</keyword>
<keyword id="KW-1185">Reference proteome</keyword>
<keyword id="KW-0677">Repeat</keyword>
<keyword id="KW-0813">Transport</keyword>
<reference key="1">
    <citation type="journal article" date="1997" name="Biochem. Biophys. Res. Commun.">
        <title>Cloning of a cDNA encoding a novel importin-alpha homologue, Qip1: discrimination of Qip1 and Rch1 from hSrp1 by their ability to interact with DNA helicase Q1/RecQL.</title>
        <authorList>
            <person name="Seki T."/>
            <person name="Tada S."/>
            <person name="Katada T."/>
            <person name="Enomoto T."/>
        </authorList>
    </citation>
    <scope>NUCLEOTIDE SEQUENCE [MRNA]</scope>
</reference>
<reference key="2">
    <citation type="journal article" date="1997" name="FEBS Lett.">
        <title>Cloning of two novel human importin-alpha subunits and analysis of the expression pattern of the importin-alpha protein family.</title>
        <authorList>
            <person name="Koehler M."/>
            <person name="Ansieau S."/>
            <person name="Prehn S."/>
            <person name="Leutz A."/>
            <person name="Haller H."/>
            <person name="Hartmann E."/>
        </authorList>
    </citation>
    <scope>NUCLEOTIDE SEQUENCE [MRNA]</scope>
    <scope>TISSUE SPECIFICITY</scope>
    <source>
        <tissue>Lung</tissue>
    </source>
</reference>
<reference key="3">
    <citation type="journal article" date="2004" name="Nat. Genet.">
        <title>Complete sequencing and characterization of 21,243 full-length human cDNAs.</title>
        <authorList>
            <person name="Ota T."/>
            <person name="Suzuki Y."/>
            <person name="Nishikawa T."/>
            <person name="Otsuki T."/>
            <person name="Sugiyama T."/>
            <person name="Irie R."/>
            <person name="Wakamatsu A."/>
            <person name="Hayashi K."/>
            <person name="Sato H."/>
            <person name="Nagai K."/>
            <person name="Kimura K."/>
            <person name="Makita H."/>
            <person name="Sekine M."/>
            <person name="Obayashi M."/>
            <person name="Nishi T."/>
            <person name="Shibahara T."/>
            <person name="Tanaka T."/>
            <person name="Ishii S."/>
            <person name="Yamamoto J."/>
            <person name="Saito K."/>
            <person name="Kawai Y."/>
            <person name="Isono Y."/>
            <person name="Nakamura Y."/>
            <person name="Nagahari K."/>
            <person name="Murakami K."/>
            <person name="Yasuda T."/>
            <person name="Iwayanagi T."/>
            <person name="Wagatsuma M."/>
            <person name="Shiratori A."/>
            <person name="Sudo H."/>
            <person name="Hosoiri T."/>
            <person name="Kaku Y."/>
            <person name="Kodaira H."/>
            <person name="Kondo H."/>
            <person name="Sugawara M."/>
            <person name="Takahashi M."/>
            <person name="Kanda K."/>
            <person name="Yokoi T."/>
            <person name="Furuya T."/>
            <person name="Kikkawa E."/>
            <person name="Omura Y."/>
            <person name="Abe K."/>
            <person name="Kamihara K."/>
            <person name="Katsuta N."/>
            <person name="Sato K."/>
            <person name="Tanikawa M."/>
            <person name="Yamazaki M."/>
            <person name="Ninomiya K."/>
            <person name="Ishibashi T."/>
            <person name="Yamashita H."/>
            <person name="Murakawa K."/>
            <person name="Fujimori K."/>
            <person name="Tanai H."/>
            <person name="Kimata M."/>
            <person name="Watanabe M."/>
            <person name="Hiraoka S."/>
            <person name="Chiba Y."/>
            <person name="Ishida S."/>
            <person name="Ono Y."/>
            <person name="Takiguchi S."/>
            <person name="Watanabe S."/>
            <person name="Yosida M."/>
            <person name="Hotuta T."/>
            <person name="Kusano J."/>
            <person name="Kanehori K."/>
            <person name="Takahashi-Fujii A."/>
            <person name="Hara H."/>
            <person name="Tanase T.-O."/>
            <person name="Nomura Y."/>
            <person name="Togiya S."/>
            <person name="Komai F."/>
            <person name="Hara R."/>
            <person name="Takeuchi K."/>
            <person name="Arita M."/>
            <person name="Imose N."/>
            <person name="Musashino K."/>
            <person name="Yuuki H."/>
            <person name="Oshima A."/>
            <person name="Sasaki N."/>
            <person name="Aotsuka S."/>
            <person name="Yoshikawa Y."/>
            <person name="Matsunawa H."/>
            <person name="Ichihara T."/>
            <person name="Shiohata N."/>
            <person name="Sano S."/>
            <person name="Moriya S."/>
            <person name="Momiyama H."/>
            <person name="Satoh N."/>
            <person name="Takami S."/>
            <person name="Terashima Y."/>
            <person name="Suzuki O."/>
            <person name="Nakagawa S."/>
            <person name="Senoh A."/>
            <person name="Mizoguchi H."/>
            <person name="Goto Y."/>
            <person name="Shimizu F."/>
            <person name="Wakebe H."/>
            <person name="Hishigaki H."/>
            <person name="Watanabe T."/>
            <person name="Sugiyama A."/>
            <person name="Takemoto M."/>
            <person name="Kawakami B."/>
            <person name="Yamazaki M."/>
            <person name="Watanabe K."/>
            <person name="Kumagai A."/>
            <person name="Itakura S."/>
            <person name="Fukuzumi Y."/>
            <person name="Fujimori Y."/>
            <person name="Komiyama M."/>
            <person name="Tashiro H."/>
            <person name="Tanigami A."/>
            <person name="Fujiwara T."/>
            <person name="Ono T."/>
            <person name="Yamada K."/>
            <person name="Fujii Y."/>
            <person name="Ozaki K."/>
            <person name="Hirao M."/>
            <person name="Ohmori Y."/>
            <person name="Kawabata A."/>
            <person name="Hikiji T."/>
            <person name="Kobatake N."/>
            <person name="Inagaki H."/>
            <person name="Ikema Y."/>
            <person name="Okamoto S."/>
            <person name="Okitani R."/>
            <person name="Kawakami T."/>
            <person name="Noguchi S."/>
            <person name="Itoh T."/>
            <person name="Shigeta K."/>
            <person name="Senba T."/>
            <person name="Matsumura K."/>
            <person name="Nakajima Y."/>
            <person name="Mizuno T."/>
            <person name="Morinaga M."/>
            <person name="Sasaki M."/>
            <person name="Togashi T."/>
            <person name="Oyama M."/>
            <person name="Hata H."/>
            <person name="Watanabe M."/>
            <person name="Komatsu T."/>
            <person name="Mizushima-Sugano J."/>
            <person name="Satoh T."/>
            <person name="Shirai Y."/>
            <person name="Takahashi Y."/>
            <person name="Nakagawa K."/>
            <person name="Okumura K."/>
            <person name="Nagase T."/>
            <person name="Nomura N."/>
            <person name="Kikuchi H."/>
            <person name="Masuho Y."/>
            <person name="Yamashita R."/>
            <person name="Nakai K."/>
            <person name="Yada T."/>
            <person name="Nakamura Y."/>
            <person name="Ohara O."/>
            <person name="Isogai T."/>
            <person name="Sugano S."/>
        </authorList>
    </citation>
    <scope>NUCLEOTIDE SEQUENCE [LARGE SCALE MRNA]</scope>
</reference>
<reference key="4">
    <citation type="submission" date="2005-09" db="EMBL/GenBank/DDBJ databases">
        <authorList>
            <person name="Mural R.J."/>
            <person name="Istrail S."/>
            <person name="Sutton G.G."/>
            <person name="Florea L."/>
            <person name="Halpern A.L."/>
            <person name="Mobarry C.M."/>
            <person name="Lippert R."/>
            <person name="Walenz B."/>
            <person name="Shatkay H."/>
            <person name="Dew I."/>
            <person name="Miller J.R."/>
            <person name="Flanigan M.J."/>
            <person name="Edwards N.J."/>
            <person name="Bolanos R."/>
            <person name="Fasulo D."/>
            <person name="Halldorsson B.V."/>
            <person name="Hannenhalli S."/>
            <person name="Turner R."/>
            <person name="Yooseph S."/>
            <person name="Lu F."/>
            <person name="Nusskern D.R."/>
            <person name="Shue B.C."/>
            <person name="Zheng X.H."/>
            <person name="Zhong F."/>
            <person name="Delcher A.L."/>
            <person name="Huson D.H."/>
            <person name="Kravitz S.A."/>
            <person name="Mouchard L."/>
            <person name="Reinert K."/>
            <person name="Remington K.A."/>
            <person name="Clark A.G."/>
            <person name="Waterman M.S."/>
            <person name="Eichler E.E."/>
            <person name="Adams M.D."/>
            <person name="Hunkapiller M.W."/>
            <person name="Myers E.W."/>
            <person name="Venter J.C."/>
        </authorList>
    </citation>
    <scope>NUCLEOTIDE SEQUENCE [LARGE SCALE GENOMIC DNA]</scope>
</reference>
<reference key="5">
    <citation type="journal article" date="2004" name="Genome Res.">
        <title>The status, quality, and expansion of the NIH full-length cDNA project: the Mammalian Gene Collection (MGC).</title>
        <authorList>
            <consortium name="The MGC Project Team"/>
        </authorList>
    </citation>
    <scope>NUCLEOTIDE SEQUENCE [LARGE SCALE MRNA]</scope>
    <source>
        <tissue>Testis</tissue>
    </source>
</reference>
<reference key="6">
    <citation type="journal article" date="1999" name="Mol. Cell. Biol.">
        <title>RanBP3 contains an unusual nuclear localization signal that is imported preferentially by importin-alpha3.</title>
        <authorList>
            <person name="Welch K."/>
            <person name="Franke J."/>
            <person name="Koehler M."/>
            <person name="Macara I.G."/>
        </authorList>
    </citation>
    <scope>FUNCTION</scope>
</reference>
<reference key="7">
    <citation type="journal article" date="2003" name="J. Virol.">
        <title>A nonconventional nuclear localization signal within the UL84 protein of human cytomegalovirus mediates nuclear import via the importin alpha/beta pathway.</title>
        <authorList>
            <person name="Lischka P."/>
            <person name="Sorg G."/>
            <person name="Kann M."/>
            <person name="Winkler M."/>
            <person name="Stamminger T."/>
        </authorList>
    </citation>
    <scope>FUNCTION (MICROBIAL INFECTION)</scope>
    <scope>INTERACTION WITH HCMV UL84</scope>
</reference>
<reference key="8">
    <citation type="journal article" date="2003" name="Nature">
        <title>Proteomic characterization of the human centrosome by protein correlation profiling.</title>
        <authorList>
            <person name="Andersen J.S."/>
            <person name="Wilkinson C.J."/>
            <person name="Mayor T."/>
            <person name="Mortensen P."/>
            <person name="Nigg E.A."/>
            <person name="Mann M."/>
        </authorList>
    </citation>
    <scope>IDENTIFICATION BY MASS SPECTROMETRY</scope>
    <source>
        <tissue>Lymphoblast</tissue>
    </source>
</reference>
<reference key="9">
    <citation type="journal article" date="2008" name="Proc. Natl. Acad. Sci. U.S.A.">
        <title>A quantitative atlas of mitotic phosphorylation.</title>
        <authorList>
            <person name="Dephoure N."/>
            <person name="Zhou C."/>
            <person name="Villen J."/>
            <person name="Beausoleil S.A."/>
            <person name="Bakalarski C.E."/>
            <person name="Elledge S.J."/>
            <person name="Gygi S.P."/>
        </authorList>
    </citation>
    <scope>PHOSPHORYLATION [LARGE SCALE ANALYSIS] AT SER-60</scope>
    <scope>IDENTIFICATION BY MASS SPECTROMETRY [LARGE SCALE ANALYSIS]</scope>
    <source>
        <tissue>Cervix carcinoma</tissue>
    </source>
</reference>
<reference key="10">
    <citation type="journal article" date="2009" name="Anal. Chem.">
        <title>Lys-N and trypsin cover complementary parts of the phosphoproteome in a refined SCX-based approach.</title>
        <authorList>
            <person name="Gauci S."/>
            <person name="Helbig A.O."/>
            <person name="Slijper M."/>
            <person name="Krijgsveld J."/>
            <person name="Heck A.J."/>
            <person name="Mohammed S."/>
        </authorList>
    </citation>
    <scope>ACETYLATION [LARGE SCALE ANALYSIS] AT ALA-2</scope>
    <scope>CLEAVAGE OF INITIATOR METHIONINE [LARGE SCALE ANALYSIS]</scope>
    <scope>IDENTIFICATION BY MASS SPECTROMETRY [LARGE SCALE ANALYSIS]</scope>
</reference>
<reference key="11">
    <citation type="journal article" date="2009" name="BMC Mol. Biol.">
        <title>Chibby forms a homodimer through a heptad repeat of leucine residues in its C-terminal coiled-coil motif.</title>
        <authorList>
            <person name="Mofunanya A."/>
            <person name="Li F.Q."/>
            <person name="Hsieh J.C."/>
            <person name="Takemaru K."/>
        </authorList>
    </citation>
    <scope>INTERACTION WITH CBY1</scope>
</reference>
<reference key="12">
    <citation type="journal article" date="2009" name="Sci. Signal.">
        <title>Quantitative phosphoproteomic analysis of T cell receptor signaling reveals system-wide modulation of protein-protein interactions.</title>
        <authorList>
            <person name="Mayya V."/>
            <person name="Lundgren D.H."/>
            <person name="Hwang S.-I."/>
            <person name="Rezaul K."/>
            <person name="Wu L."/>
            <person name="Eng J.K."/>
            <person name="Rodionov V."/>
            <person name="Han D.K."/>
        </authorList>
    </citation>
    <scope>PHOSPHORYLATION [LARGE SCALE ANALYSIS] AT SER-60</scope>
    <scope>IDENTIFICATION BY MASS SPECTROMETRY [LARGE SCALE ANALYSIS]</scope>
    <source>
        <tissue>Leukemic T-cell</tissue>
    </source>
</reference>
<reference key="13">
    <citation type="journal article" date="2010" name="EMBO J.">
        <title>An actin-regulated importin alpha/beta-dependent extended bipartite NLS directs nuclear import of MRTF-A.</title>
        <authorList>
            <person name="Pawlowski R."/>
            <person name="Rajakylae E.K."/>
            <person name="Vartiainen M.K."/>
            <person name="Treisman R."/>
        </authorList>
    </citation>
    <scope>FUNCTION</scope>
    <scope>INTERACTION WITH KPNB1</scope>
</reference>
<reference key="14">
    <citation type="journal article" date="2010" name="Sci. Signal.">
        <title>Quantitative phosphoproteomics reveals widespread full phosphorylation site occupancy during mitosis.</title>
        <authorList>
            <person name="Olsen J.V."/>
            <person name="Vermeulen M."/>
            <person name="Santamaria A."/>
            <person name="Kumar C."/>
            <person name="Miller M.L."/>
            <person name="Jensen L.J."/>
            <person name="Gnad F."/>
            <person name="Cox J."/>
            <person name="Jensen T.S."/>
            <person name="Nigg E.A."/>
            <person name="Brunak S."/>
            <person name="Mann M."/>
        </authorList>
    </citation>
    <scope>IDENTIFICATION BY MASS SPECTROMETRY [LARGE SCALE ANALYSIS]</scope>
    <source>
        <tissue>Cervix carcinoma</tissue>
    </source>
</reference>
<reference key="15">
    <citation type="journal article" date="2011" name="BMC Syst. Biol.">
        <title>Initial characterization of the human central proteome.</title>
        <authorList>
            <person name="Burkard T.R."/>
            <person name="Planyavsky M."/>
            <person name="Kaupe I."/>
            <person name="Breitwieser F.P."/>
            <person name="Buerckstuemmer T."/>
            <person name="Bennett K.L."/>
            <person name="Superti-Furga G."/>
            <person name="Colinge J."/>
        </authorList>
    </citation>
    <scope>IDENTIFICATION BY MASS SPECTROMETRY [LARGE SCALE ANALYSIS]</scope>
</reference>
<reference key="16">
    <citation type="journal article" date="2011" name="J. Biol. Chem.">
        <title>Importin alpha protein acts as a negative regulator for Snail protein nuclear import.</title>
        <authorList>
            <person name="Sekimoto T."/>
            <person name="Miyamoto Y."/>
            <person name="Arai S."/>
            <person name="Yoneda Y."/>
        </authorList>
    </citation>
    <scope>INTERACTION WITH SNAI1</scope>
</reference>
<reference key="17">
    <citation type="journal article" date="2012" name="Proc. Natl. Acad. Sci. U.S.A.">
        <title>N-terminal acetylome analyses and functional insights of the N-terminal acetyltransferase NatB.</title>
        <authorList>
            <person name="Van Damme P."/>
            <person name="Lasa M."/>
            <person name="Polevoda B."/>
            <person name="Gazquez C."/>
            <person name="Elosegui-Artola A."/>
            <person name="Kim D.S."/>
            <person name="De Juan-Pardo E."/>
            <person name="Demeyer K."/>
            <person name="Hole K."/>
            <person name="Larrea E."/>
            <person name="Timmerman E."/>
            <person name="Prieto J."/>
            <person name="Arnesen T."/>
            <person name="Sherman F."/>
            <person name="Gevaert K."/>
            <person name="Aldabe R."/>
        </authorList>
    </citation>
    <scope>ACETYLATION [LARGE SCALE ANALYSIS] AT ALA-2</scope>
    <scope>CLEAVAGE OF INITIATOR METHIONINE [LARGE SCALE ANALYSIS]</scope>
    <scope>IDENTIFICATION BY MASS SPECTROMETRY [LARGE SCALE ANALYSIS]</scope>
</reference>
<reference key="18">
    <citation type="journal article" date="2013" name="J. Proteome Res.">
        <title>Toward a comprehensive characterization of a human cancer cell phosphoproteome.</title>
        <authorList>
            <person name="Zhou H."/>
            <person name="Di Palma S."/>
            <person name="Preisinger C."/>
            <person name="Peng M."/>
            <person name="Polat A.N."/>
            <person name="Heck A.J."/>
            <person name="Mohammed S."/>
        </authorList>
    </citation>
    <scope>PHOSPHORYLATION [LARGE SCALE ANALYSIS] AT SER-60</scope>
    <scope>IDENTIFICATION BY MASS SPECTROMETRY [LARGE SCALE ANALYSIS]</scope>
    <source>
        <tissue>Cervix carcinoma</tissue>
        <tissue>Erythroleukemia</tissue>
    </source>
</reference>
<reference key="19">
    <citation type="journal article" date="2013" name="J. Virol.">
        <title>Dissection of the C-terminal region of E1A redefines the roles of CtBP and other cellular targets in oncogenic transformation.</title>
        <authorList>
            <person name="Cohen M.J."/>
            <person name="Yousef A.F."/>
            <person name="Massimi P."/>
            <person name="Fonseca G.J."/>
            <person name="Todorovic B."/>
            <person name="Pelka P."/>
            <person name="Turnell A.S."/>
            <person name="Banks L."/>
            <person name="Mymryk J.S."/>
        </authorList>
    </citation>
    <scope>INTERACTION WITH HADV5 E1A (MICROBIAL INFECTION)</scope>
</reference>
<reference key="20">
    <citation type="journal article" date="2013" name="Virol. J.">
        <title>Chikungunya virus capsid protein contains nuclear import and export signals.</title>
        <authorList>
            <person name="Thomas S."/>
            <person name="Rai J."/>
            <person name="John L."/>
            <person name="Schaefer S."/>
            <person name="Puetzer B.M."/>
            <person name="Herchenroeder O."/>
        </authorList>
    </citation>
    <scope>INTERACTION WITH CHIKUNGUNYA VIRUS CAPSID PROTEIN (MICROBIAL INFECTION)</scope>
</reference>
<reference key="21">
    <citation type="journal article" date="2014" name="J. Proteomics">
        <title>An enzyme assisted RP-RPLC approach for in-depth analysis of human liver phosphoproteome.</title>
        <authorList>
            <person name="Bian Y."/>
            <person name="Song C."/>
            <person name="Cheng K."/>
            <person name="Dong M."/>
            <person name="Wang F."/>
            <person name="Huang J."/>
            <person name="Sun D."/>
            <person name="Wang L."/>
            <person name="Ye M."/>
            <person name="Zou H."/>
        </authorList>
    </citation>
    <scope>PHOSPHORYLATION [LARGE SCALE ANALYSIS] AT SER-60</scope>
    <scope>IDENTIFICATION BY MASS SPECTROMETRY [LARGE SCALE ANALYSIS]</scope>
    <source>
        <tissue>Liver</tissue>
    </source>
</reference>
<reference key="22">
    <citation type="journal article" date="2018" name="PLoS Pathog.">
        <title>MERS-CoV 4b protein interferes with the NF-kappaB-dependent innate immune response during infection.</title>
        <authorList>
            <person name="Canton J."/>
            <person name="Fehr A.R."/>
            <person name="Fernandez-Delgado R."/>
            <person name="Gutierrez-Alvarez F.J."/>
            <person name="Sanchez-Aparicio M.T."/>
            <person name="Garcia-Sastre A."/>
            <person name="Perlman S."/>
            <person name="Enjuanes L."/>
            <person name="Sola I."/>
        </authorList>
    </citation>
    <scope>INTERACTION WITH MERS VIRUS PROTEIN ORF4B</scope>
</reference>
<reference key="23">
    <citation type="journal article" date="2024" name="J. Clin. Invest.">
        <title>The alanyl-tRNA synthetase AARS1 moonlights as a lactyltransferase to promote YAP signaling in gastric cancer.</title>
        <authorList>
            <person name="Ju J."/>
            <person name="Zhang H."/>
            <person name="Lin M."/>
            <person name="Yan Z."/>
            <person name="An L."/>
            <person name="Cao Z."/>
            <person name="Geng D."/>
            <person name="Yue J."/>
            <person name="Tang Y."/>
            <person name="Tian L."/>
            <person name="Chen F."/>
            <person name="Han Y."/>
            <person name="Wang W."/>
            <person name="Zhao S."/>
            <person name="Jiao S."/>
            <person name="Zhou Z."/>
        </authorList>
    </citation>
    <scope>FUNCTION</scope>
</reference>
<reference evidence="22" key="24">
    <citation type="journal article" date="2017" name="Biochem. Biophys. Res. Commun.">
        <title>Crystal structure of importin-alpha3 bound to the nuclear localization signal of Ran-binding protein 3.</title>
        <authorList>
            <person name="Koyama M."/>
            <person name="Matsuura Y."/>
        </authorList>
    </citation>
    <scope>X-RAY CRYSTALLOGRAPHY (3.00 ANGSTROMS) OF 70-485 IN COMPLEX WITH RANBP3</scope>
    <scope>FUNCTION</scope>
    <scope>SUBCELLULAR LOCATION</scope>
</reference>
<reference evidence="21" key="25">
    <citation type="journal article" date="2017" name="Nat. Commun.">
        <title>Three-dimensional context rather than NLS amino acid sequence determines importin alpha subtype specificity for RCC1.</title>
        <authorList>
            <person name="Sankhala R.S."/>
            <person name="Lokareddy R.K."/>
            <person name="Begum S."/>
            <person name="Pumroy R.A."/>
            <person name="Gillilan R.E."/>
            <person name="Cingolani G."/>
        </authorList>
    </citation>
    <scope>X-RAY CRYSTALLOGRAPHY (3.45 ANGSTROMS) IN COMPLEX WITH RCC1</scope>
    <scope>FUNCTION</scope>
    <scope>SUBCELLULAR LOCATION</scope>
</reference>
<comment type="function">
    <text evidence="3 6 10 11 13">Functions in nuclear protein import as an adapter protein for nuclear receptor KPNB1 (PubMed:10567565, PubMed:20818336, PubMed:28760339, PubMed:29042532, PubMed:38512451). Binds specifically and directly to substrates containing either a simple or bipartite NLS motif (PubMed:20818336, PubMed:28760339, PubMed:29042532, PubMed:38512451). Docking of the importin/substrate complex to the nuclear pore complex (NPC) is mediated by KPNB1 through binding to nucleoporin FxFG repeats and the complex is subsequently translocated through the pore by an energy requiring, Ran-dependent mechanism (PubMed:20818336, PubMed:28760339, PubMed:29042532, PubMed:38512451). At the nucleoplasmic side of the NPC, Ran binds to importin-beta and the three components separate and importin-alpha and -beta are re-exported from the nucleus to the cytoplasm where GTP hydrolysis releases Ran from importin (PubMed:20818336, PubMed:28760339, PubMed:29042532, PubMed:38512451). The directionality of nuclear import is thought to be conferred by an asymmetric distribution of the GTP- and GDP-bound forms of Ran between the cytoplasm and nucleus (PubMed:20818336, PubMed:28760339, PubMed:29042532, PubMed:38512451). Mediates nuclear import of AARS1, MRTFA and RANBP3 (PubMed:10567565, PubMed:20818336, PubMed:28760339, PubMed:38512451).</text>
</comment>
<comment type="function">
    <text evidence="4">(Microbial infection) In vitro, mediates the nuclear import of human cytomegalovirus UL84 by recognizing a non-classical NLS. In vitro, mediates the nuclear import of human cytomegalovirus UL84 by recognizing a non-classical NLS.</text>
</comment>
<comment type="subunit">
    <text evidence="1 5 6 7">Forms a complex with importin subunit beta-1 (KPNB1) (PubMed:20818336). Interacts with SNAI1 (PubMed:21454664). Interacts with TALDO1 isoform 1 (By similarity). Interacts with CYB1 (PubMed:19435523).</text>
</comment>
<comment type="subunit">
    <text evidence="1 12">(Microbial infection) Interacts with MERS virus protein OF4b; this interaction prevents the translocation of NF-kappa-B complex to the nucleus.</text>
</comment>
<comment type="subunit">
    <text evidence="8">(Microbial infection) Interacts with human adenovirus 5 E1A protein; this interaction allows E1A import into the host nucleus.</text>
</comment>
<comment type="subunit">
    <text evidence="9">(Microbial infection) Interacts with Chikungunya virus capsid protein; this interaction allows the nuclear import of the viral capsid protein.</text>
</comment>
<comment type="interaction">
    <interactant intactId="EBI-396343">
        <id>O00629</id>
    </interactant>
    <interactant intactId="EBI-1263451">
        <id>Q6UWZ7</id>
        <label>ABRAXAS1</label>
    </interactant>
    <organismsDiffer>false</organismsDiffer>
    <experiments>2</experiments>
</comment>
<comment type="interaction">
    <interactant intactId="EBI-396343">
        <id>O00629</id>
    </interactant>
    <interactant intactId="EBI-374969">
        <id>O75419</id>
        <label>CDC45</label>
    </interactant>
    <organismsDiffer>false</organismsDiffer>
    <experiments>2</experiments>
</comment>
<comment type="interaction">
    <interactant intactId="EBI-396343">
        <id>O00629</id>
    </interactant>
    <interactant intactId="EBI-81215">
        <id>Q92793</id>
        <label>CREBBP</label>
    </interactant>
    <organismsDiffer>false</organismsDiffer>
    <experiments>2</experiments>
</comment>
<comment type="interaction">
    <interactant intactId="EBI-396343">
        <id>O00629</id>
    </interactant>
    <interactant intactId="EBI-3908824">
        <id>Q6ZMK1</id>
        <label>CYHR1</label>
    </interactant>
    <organismsDiffer>false</organismsDiffer>
    <experiments>3</experiments>
</comment>
<comment type="interaction">
    <interactant intactId="EBI-396343">
        <id>O00629</id>
    </interactant>
    <interactant intactId="EBI-742802">
        <id>Q9Y247</id>
        <label>FAM50B</label>
    </interactant>
    <organismsDiffer>false</organismsDiffer>
    <experiments>3</experiments>
</comment>
<comment type="interaction">
    <interactant intactId="EBI-396343">
        <id>O00629</id>
    </interactant>
    <interactant intactId="EBI-357966">
        <id>P07910</id>
        <label>HNRNPC</label>
    </interactant>
    <organismsDiffer>false</organismsDiffer>
    <experiments>8</experiments>
</comment>
<comment type="interaction">
    <interactant intactId="EBI-396343">
        <id>O00629</id>
    </interactant>
    <interactant intactId="EBI-3918847">
        <id>Q9H2F3</id>
        <label>HSD3B7</label>
    </interactant>
    <organismsDiffer>false</organismsDiffer>
    <experiments>3</experiments>
</comment>
<comment type="interaction">
    <interactant intactId="EBI-396343">
        <id>O00629</id>
    </interactant>
    <interactant intactId="EBI-399080">
        <id>Q92993</id>
        <label>KAT5</label>
    </interactant>
    <organismsDiffer>false</organismsDiffer>
    <experiments>3</experiments>
</comment>
<comment type="interaction">
    <interactant intactId="EBI-396343">
        <id>O00629</id>
    </interactant>
    <interactant intactId="EBI-286758">
        <id>Q14974</id>
        <label>KPNB1</label>
    </interactant>
    <organismsDiffer>false</organismsDiffer>
    <experiments>6</experiments>
</comment>
<comment type="interaction">
    <interactant intactId="EBI-396343">
        <id>O00629</id>
    </interactant>
    <interactant intactId="EBI-10317491">
        <id>Q9NZL9</id>
        <label>MAT2B</label>
    </interactant>
    <organismsDiffer>false</organismsDiffer>
    <experiments>3</experiments>
</comment>
<comment type="interaction">
    <interactant intactId="EBI-396343">
        <id>O00629</id>
    </interactant>
    <interactant intactId="EBI-714236">
        <id>Q13330</id>
        <label>MTA1</label>
    </interactant>
    <organismsDiffer>false</organismsDiffer>
    <experiments>4</experiments>
</comment>
<comment type="interaction">
    <interactant intactId="EBI-396343">
        <id>O00629</id>
    </interactant>
    <interactant intactId="EBI-447544">
        <id>P01106</id>
        <label>MYC</label>
    </interactant>
    <organismsDiffer>false</organismsDiffer>
    <experiments>20</experiments>
</comment>
<comment type="interaction">
    <interactant intactId="EBI-396343">
        <id>O00629</id>
    </interactant>
    <interactant intactId="EBI-6657994">
        <id>Q53F19</id>
        <label>NCBP3</label>
    </interactant>
    <organismsDiffer>false</organismsDiffer>
    <experiments>5</experiments>
</comment>
<comment type="interaction">
    <interactant intactId="EBI-396343">
        <id>O00629</id>
    </interactant>
    <interactant intactId="EBI-80830">
        <id>Q9Y618</id>
        <label>NCOR2</label>
    </interactant>
    <organismsDiffer>false</organismsDiffer>
    <experiments>32</experiments>
</comment>
<comment type="interaction">
    <interactant intactId="EBI-396343">
        <id>O00629</id>
    </interactant>
    <interactant intactId="EBI-2007911">
        <id>Q16236</id>
        <label>NFE2L2</label>
    </interactant>
    <organismsDiffer>false</organismsDiffer>
    <experiments>4</experiments>
</comment>
<comment type="interaction">
    <interactant intactId="EBI-396343">
        <id>O00629</id>
    </interactant>
    <interactant intactId="EBI-78579">
        <id>P06748</id>
        <label>NPM1</label>
    </interactant>
    <organismsDiffer>false</organismsDiffer>
    <experiments>2</experiments>
</comment>
<comment type="interaction">
    <interactant intactId="EBI-396343">
        <id>O00629</id>
    </interactant>
    <interactant intactId="EBI-2371082">
        <id>Q9UKX7</id>
        <label>NUP50</label>
    </interactant>
    <organismsDiffer>false</organismsDiffer>
    <experiments>9</experiments>
</comment>
<comment type="interaction">
    <interactant intactId="EBI-396343">
        <id>O00629</id>
    </interactant>
    <interactant intactId="EBI-1994037">
        <id>Q9Y263</id>
        <label>PLAA</label>
    </interactant>
    <organismsDiffer>false</organismsDiffer>
    <experiments>3</experiments>
</comment>
<comment type="interaction">
    <interactant intactId="EBI-396343">
        <id>O00629</id>
    </interactant>
    <interactant intactId="EBI-992681">
        <id>Q9H6Z4</id>
        <label>RANBP3</label>
    </interactant>
    <organismsDiffer>false</organismsDiffer>
    <experiments>3</experiments>
</comment>
<comment type="interaction">
    <interactant intactId="EBI-396343">
        <id>O00629</id>
    </interactant>
    <interactant intactId="EBI-2823728">
        <id>P46063</id>
        <label>RECQL</label>
    </interactant>
    <organismsDiffer>false</organismsDiffer>
    <experiments>2</experiments>
</comment>
<comment type="interaction">
    <interactant intactId="EBI-396343">
        <id>O00629</id>
    </interactant>
    <interactant intactId="EBI-372899">
        <id>Q13148</id>
        <label>TARDBP</label>
    </interactant>
    <organismsDiffer>false</organismsDiffer>
    <experiments>3</experiments>
</comment>
<comment type="interaction">
    <interactant intactId="EBI-396343">
        <id>O00629</id>
    </interactant>
    <interactant intactId="EBI-11035148">
        <id>Q8TF50</id>
        <label>ZNF526</label>
    </interactant>
    <organismsDiffer>false</organismsDiffer>
    <experiments>2</experiments>
</comment>
<comment type="interaction">
    <interactant intactId="EBI-396343">
        <id>O00629</id>
    </interactant>
    <interactant intactId="EBI-9872653">
        <id>PRO_0000042447</id>
        <label>gag-pol</label>
        <dbReference type="UniProtKB" id="P04585"/>
    </interactant>
    <organismsDiffer>true</organismsDiffer>
    <experiments>4</experiments>
</comment>
<comment type="interaction">
    <interactant intactId="EBI-396343">
        <id>O00629</id>
    </interactant>
    <interactant intactId="EBI-8291665">
        <id>Q8K4J6</id>
        <label>Mrtfa</label>
    </interactant>
    <organismsDiffer>true</organismsDiffer>
    <experiments>4</experiments>
</comment>
<comment type="interaction">
    <interactant intactId="EBI-396343">
        <id>O00629</id>
    </interactant>
    <interactant intactId="EBI-25641007">
        <id>K9N643</id>
        <label>ORF4b</label>
    </interactant>
    <organismsDiffer>true</organismsDiffer>
    <experiments>7</experiments>
</comment>
<comment type="interaction">
    <interactant intactId="EBI-396343">
        <id>O00629</id>
    </interactant>
    <interactant intactId="EBI-6051231">
        <id>P31345</id>
        <label>PB2</label>
    </interactant>
    <organismsDiffer>true</organismsDiffer>
    <experiments>3</experiments>
</comment>
<comment type="interaction">
    <interactant intactId="EBI-396343">
        <id>O00629</id>
    </interactant>
    <interactant intactId="EBI-617698">
        <id>P03070</id>
    </interactant>
    <organismsDiffer>true</organismsDiffer>
    <experiments>2</experiments>
</comment>
<comment type="subcellular location">
    <subcellularLocation>
        <location evidence="18 19">Cytoplasm</location>
    </subcellularLocation>
    <subcellularLocation>
        <location evidence="18 19">Nucleus</location>
    </subcellularLocation>
</comment>
<comment type="tissue specificity">
    <text evidence="14">Highly expressed in testis, ovary, small intestine, heart, skeletal muscle, lung and pancreas, but barely detectable in kidney, thymus, colon and peripheral blood leukocytes.</text>
</comment>
<comment type="domain">
    <text evidence="10 11">Consists of an N-terminal hydrophilic region, a hydrophobic central region composed of 10 repeats, and a short hydrophilic C-terminus. The N-terminal hydrophilic region contains the importin beta binding domain (IBB domain), which is sufficient for binding importin beta and essential for nuclear protein import.</text>
</comment>
<comment type="domain">
    <text evidence="11">The IBB domain is thought to act as an intrasteric autoregulatory sequence by interacting with the internal autoinhibitory NLS. Binding of KPNB1 probably overlaps the internal NLS and contributes to a high affinity for cytoplasmic NLS-containing cargo substrates. After dissociation of the importin/substrate complex in the nucleus the internal autohibitory NLS contributes to a low affinity for nuclear NLS-containing proteins.</text>
</comment>
<comment type="domain">
    <text evidence="11">The major and minor NLS binding sites are mainly involved in recognition of simple or bipartite NLS motifs. Structurally located within in a helical surface groove they contain several conserved Trp and Asn residues of the corresponding third helices (H3) of ARM repeats which mainly contribute to binding.</text>
</comment>
<comment type="similarity">
    <text evidence="17">Belongs to the importin alpha family.</text>
</comment>
<name>IMA3_HUMAN</name>
<gene>
    <name evidence="15 20" type="primary">KPNA4</name>
    <name evidence="16" type="synonym">QIP1</name>
</gene>
<accession>O00629</accession>
<accession>A8K4S6</accession>
<accession>D3DNM2</accession>
<accession>O00190</accession>
<organism>
    <name type="scientific">Homo sapiens</name>
    <name type="common">Human</name>
    <dbReference type="NCBI Taxonomy" id="9606"/>
    <lineage>
        <taxon>Eukaryota</taxon>
        <taxon>Metazoa</taxon>
        <taxon>Chordata</taxon>
        <taxon>Craniata</taxon>
        <taxon>Vertebrata</taxon>
        <taxon>Euteleostomi</taxon>
        <taxon>Mammalia</taxon>
        <taxon>Eutheria</taxon>
        <taxon>Euarchontoglires</taxon>
        <taxon>Primates</taxon>
        <taxon>Haplorrhini</taxon>
        <taxon>Catarrhini</taxon>
        <taxon>Hominidae</taxon>
        <taxon>Homo</taxon>
    </lineage>
</organism>
<feature type="initiator methionine" description="Removed" evidence="24 26">
    <location>
        <position position="1"/>
    </location>
</feature>
<feature type="chain" id="PRO_0000120726" description="Importin subunit alpha-3">
    <location>
        <begin position="2"/>
        <end position="521"/>
    </location>
</feature>
<feature type="domain" description="IBB" evidence="2">
    <location>
        <begin position="2"/>
        <end position="58"/>
    </location>
</feature>
<feature type="repeat" description="ARM 1; truncated">
    <location>
        <begin position="66"/>
        <end position="106"/>
    </location>
</feature>
<feature type="repeat" description="ARM 2">
    <location>
        <begin position="107"/>
        <end position="149"/>
    </location>
</feature>
<feature type="repeat" description="ARM 3">
    <location>
        <begin position="150"/>
        <end position="194"/>
    </location>
</feature>
<feature type="repeat" description="ARM 4">
    <location>
        <begin position="195"/>
        <end position="233"/>
    </location>
</feature>
<feature type="repeat" description="ARM 5">
    <location>
        <begin position="234"/>
        <end position="278"/>
    </location>
</feature>
<feature type="repeat" description="ARM 6">
    <location>
        <begin position="279"/>
        <end position="318"/>
    </location>
</feature>
<feature type="repeat" description="ARM 7">
    <location>
        <begin position="319"/>
        <end position="360"/>
    </location>
</feature>
<feature type="repeat" description="ARM 8">
    <location>
        <begin position="361"/>
        <end position="400"/>
    </location>
</feature>
<feature type="repeat" description="ARM 9">
    <location>
        <begin position="401"/>
        <end position="443"/>
    </location>
</feature>
<feature type="repeat" description="ARM 10; atypical">
    <location>
        <begin position="447"/>
        <end position="485"/>
    </location>
</feature>
<feature type="region of interest" description="NLS binding site (major)" evidence="11">
    <location>
        <begin position="137"/>
        <end position="229"/>
    </location>
</feature>
<feature type="region of interest" description="NLS binding site (minor)" evidence="11">
    <location>
        <begin position="306"/>
        <end position="394"/>
    </location>
</feature>
<feature type="short sequence motif" description="Nuclear localization signal" evidence="11">
    <location>
        <begin position="43"/>
        <end position="52"/>
    </location>
</feature>
<feature type="modified residue" description="N-acetylalanine" evidence="24 26">
    <location>
        <position position="2"/>
    </location>
</feature>
<feature type="modified residue" description="Phosphoserine" evidence="23 25 27 28">
    <location>
        <position position="60"/>
    </location>
</feature>
<feature type="sequence conflict" description="In Ref. 2; CAA73025." evidence="17" ref="2">
    <original>Q</original>
    <variation>T</variation>
    <location>
        <position position="241"/>
    </location>
</feature>
<feature type="helix" evidence="30">
    <location>
        <begin position="73"/>
        <end position="80"/>
    </location>
</feature>
<feature type="strand" evidence="29">
    <location>
        <begin position="82"/>
        <end position="84"/>
    </location>
</feature>
<feature type="helix" evidence="30">
    <location>
        <begin position="85"/>
        <end position="100"/>
    </location>
</feature>
<feature type="strand" evidence="30">
    <location>
        <begin position="101"/>
        <end position="104"/>
    </location>
</feature>
<feature type="helix" evidence="30">
    <location>
        <begin position="107"/>
        <end position="112"/>
    </location>
</feature>
<feature type="helix" evidence="30">
    <location>
        <begin position="115"/>
        <end position="122"/>
    </location>
</feature>
<feature type="helix" evidence="30">
    <location>
        <begin position="129"/>
        <end position="142"/>
    </location>
</feature>
<feature type="helix" evidence="30">
    <location>
        <begin position="147"/>
        <end position="155"/>
    </location>
</feature>
<feature type="helix" evidence="30">
    <location>
        <begin position="158"/>
        <end position="165"/>
    </location>
</feature>
<feature type="helix" evidence="30">
    <location>
        <begin position="171"/>
        <end position="185"/>
    </location>
</feature>
<feature type="helix" evidence="30">
    <location>
        <begin position="189"/>
        <end position="197"/>
    </location>
</feature>
<feature type="helix" evidence="30">
    <location>
        <begin position="201"/>
        <end position="206"/>
    </location>
</feature>
<feature type="strand" evidence="32">
    <location>
        <begin position="209"/>
        <end position="212"/>
    </location>
</feature>
<feature type="helix" evidence="30">
    <location>
        <begin position="214"/>
        <end position="228"/>
    </location>
</feature>
<feature type="strand" evidence="31">
    <location>
        <begin position="231"/>
        <end position="233"/>
    </location>
</feature>
<feature type="helix" evidence="30">
    <location>
        <begin position="237"/>
        <end position="250"/>
    </location>
</feature>
<feature type="helix" evidence="30">
    <location>
        <begin position="256"/>
        <end position="270"/>
    </location>
</feature>
<feature type="helix" evidence="30">
    <location>
        <begin position="274"/>
        <end position="282"/>
    </location>
</feature>
<feature type="helix" evidence="30">
    <location>
        <begin position="286"/>
        <end position="289"/>
    </location>
</feature>
<feature type="helix" evidence="30">
    <location>
        <begin position="290"/>
        <end position="294"/>
    </location>
</feature>
<feature type="helix" evidence="30">
    <location>
        <begin position="298"/>
        <end position="311"/>
    </location>
</feature>
<feature type="helix" evidence="30">
    <location>
        <begin position="316"/>
        <end position="323"/>
    </location>
</feature>
<feature type="turn" evidence="30">
    <location>
        <begin position="324"/>
        <end position="326"/>
    </location>
</feature>
<feature type="helix" evidence="30">
    <location>
        <begin position="327"/>
        <end position="330"/>
    </location>
</feature>
<feature type="helix" evidence="30">
    <location>
        <begin position="332"/>
        <end position="335"/>
    </location>
</feature>
<feature type="helix" evidence="30">
    <location>
        <begin position="340"/>
        <end position="354"/>
    </location>
</feature>
<feature type="helix" evidence="30">
    <location>
        <begin position="358"/>
        <end position="366"/>
    </location>
</feature>
<feature type="helix" evidence="30">
    <location>
        <begin position="370"/>
        <end position="379"/>
    </location>
</feature>
<feature type="helix" evidence="30">
    <location>
        <begin position="382"/>
        <end position="395"/>
    </location>
</feature>
<feature type="turn" evidence="30">
    <location>
        <begin position="396"/>
        <end position="398"/>
    </location>
</feature>
<feature type="helix" evidence="30">
    <location>
        <begin position="401"/>
        <end position="409"/>
    </location>
</feature>
<feature type="helix" evidence="30">
    <location>
        <begin position="413"/>
        <end position="417"/>
    </location>
</feature>
<feature type="helix" evidence="30">
    <location>
        <begin position="418"/>
        <end position="421"/>
    </location>
</feature>
<feature type="helix" evidence="30">
    <location>
        <begin position="425"/>
        <end position="441"/>
    </location>
</feature>
<feature type="turn" evidence="30">
    <location>
        <begin position="443"/>
        <end position="445"/>
    </location>
</feature>
<feature type="helix" evidence="30">
    <location>
        <begin position="446"/>
        <end position="455"/>
    </location>
</feature>
<feature type="helix" evidence="30">
    <location>
        <begin position="458"/>
        <end position="465"/>
    </location>
</feature>
<feature type="helix" evidence="30">
    <location>
        <begin position="471"/>
        <end position="484"/>
    </location>
</feature>
<sequence length="521" mass="57887">MADNEKLDNQRLKNFKNKGRDLETMRRQRNEVVVELRKNKRDEHLLKRRNVPHEDICEDSDIDGDYRVQNTSLEAIVQNASSDNQGIQLSAVQAARKLLSSDRNPPIDDLIKSGILPILVHCLERDDNPSLQFEAAWALTNIASGTSEQTQAVVQSNAVPLFLRLLHSPHQNVCEQAVWALGNIIGDGPQCRDYVISLGVVKPLLSFISPSIPITFLRNVTWVMVNLCRHKDPPPPMETIQEILPALCVLIHHTDVNILVDTVWALSYLTDAGNEQIQMVIDSGIVPHLVPLLSHQEVKVQTAALRAVGNIVTGTDEQTQVVLNCDALSHFPALLTHPKEKINKEAVWFLSNITAGNQQQVQAVIDANLVPMIIHLLDKGDFGTQKEAAWAISNLTISGRKDQVAYLIQQNVIPPFCNLLTVKDAQVVQVVLDGLSNILKMAEDEAETIGNLIEECGGLEKIEQLQNHENEDIYKLAYEIIDQFFSSDDIDEDPSLVPEAIQGGTFGFNSSANVPTEGFQF</sequence>
<proteinExistence type="evidence at protein level"/>
<evidence type="ECO:0000250" key="1">
    <source>
        <dbReference type="UniProtKB" id="O35343"/>
    </source>
</evidence>
<evidence type="ECO:0000255" key="2">
    <source>
        <dbReference type="PROSITE-ProRule" id="PRU00561"/>
    </source>
</evidence>
<evidence type="ECO:0000269" key="3">
    <source>
    </source>
</evidence>
<evidence type="ECO:0000269" key="4">
    <source>
    </source>
</evidence>
<evidence type="ECO:0000269" key="5">
    <source>
    </source>
</evidence>
<evidence type="ECO:0000269" key="6">
    <source>
    </source>
</evidence>
<evidence type="ECO:0000269" key="7">
    <source>
    </source>
</evidence>
<evidence type="ECO:0000269" key="8">
    <source>
    </source>
</evidence>
<evidence type="ECO:0000269" key="9">
    <source>
    </source>
</evidence>
<evidence type="ECO:0000269" key="10">
    <source>
    </source>
</evidence>
<evidence type="ECO:0000269" key="11">
    <source>
    </source>
</evidence>
<evidence type="ECO:0000269" key="12">
    <source>
    </source>
</evidence>
<evidence type="ECO:0000269" key="13">
    <source>
    </source>
</evidence>
<evidence type="ECO:0000269" key="14">
    <source>
    </source>
</evidence>
<evidence type="ECO:0000303" key="15">
    <source>
    </source>
</evidence>
<evidence type="ECO:0000303" key="16">
    <source>
    </source>
</evidence>
<evidence type="ECO:0000305" key="17"/>
<evidence type="ECO:0000305" key="18">
    <source>
    </source>
</evidence>
<evidence type="ECO:0000305" key="19">
    <source>
    </source>
</evidence>
<evidence type="ECO:0000312" key="20">
    <source>
        <dbReference type="HGNC" id="HGNC:6397"/>
    </source>
</evidence>
<evidence type="ECO:0007744" key="21">
    <source>
        <dbReference type="PDB" id="5TBK"/>
    </source>
</evidence>
<evidence type="ECO:0007744" key="22">
    <source>
        <dbReference type="PDB" id="5XZX"/>
    </source>
</evidence>
<evidence type="ECO:0007744" key="23">
    <source>
    </source>
</evidence>
<evidence type="ECO:0007744" key="24">
    <source>
    </source>
</evidence>
<evidence type="ECO:0007744" key="25">
    <source>
    </source>
</evidence>
<evidence type="ECO:0007744" key="26">
    <source>
    </source>
</evidence>
<evidence type="ECO:0007744" key="27">
    <source>
    </source>
</evidence>
<evidence type="ECO:0007744" key="28">
    <source>
    </source>
</evidence>
<evidence type="ECO:0007829" key="29">
    <source>
        <dbReference type="PDB" id="6BVZ"/>
    </source>
</evidence>
<evidence type="ECO:0007829" key="30">
    <source>
        <dbReference type="PDB" id="6BW9"/>
    </source>
</evidence>
<evidence type="ECO:0007829" key="31">
    <source>
        <dbReference type="PDB" id="7LF4"/>
    </source>
</evidence>
<evidence type="ECO:0007829" key="32">
    <source>
        <dbReference type="PDB" id="7RG5"/>
    </source>
</evidence>
<protein>
    <recommendedName>
        <fullName evidence="17">Importin subunit alpha-3</fullName>
    </recommendedName>
    <alternativeName>
        <fullName evidence="16">Importin alpha Q1</fullName>
        <shortName evidence="16">Qip1</shortName>
    </alternativeName>
    <alternativeName>
        <fullName>Karyopherin subunit alpha-4</fullName>
    </alternativeName>
</protein>
<dbReference type="EMBL" id="AB002533">
    <property type="protein sequence ID" value="BAA19546.1"/>
    <property type="molecule type" value="mRNA"/>
</dbReference>
<dbReference type="EMBL" id="AK291041">
    <property type="protein sequence ID" value="BAF83730.1"/>
    <property type="molecule type" value="mRNA"/>
</dbReference>
<dbReference type="EMBL" id="CH471052">
    <property type="protein sequence ID" value="EAW78632.1"/>
    <property type="molecule type" value="Genomic_DNA"/>
</dbReference>
<dbReference type="EMBL" id="CH471052">
    <property type="protein sequence ID" value="EAW78633.1"/>
    <property type="molecule type" value="Genomic_DNA"/>
</dbReference>
<dbReference type="EMBL" id="U93240">
    <property type="protein sequence ID" value="AAC25605.1"/>
    <property type="molecule type" value="mRNA"/>
</dbReference>
<dbReference type="EMBL" id="Y12393">
    <property type="protein sequence ID" value="CAA73025.1"/>
    <property type="molecule type" value="mRNA"/>
</dbReference>
<dbReference type="EMBL" id="BC028691">
    <property type="protein sequence ID" value="AAH28691.1"/>
    <property type="molecule type" value="mRNA"/>
</dbReference>
<dbReference type="EMBL" id="BC034493">
    <property type="protein sequence ID" value="AAH34493.1"/>
    <property type="molecule type" value="mRNA"/>
</dbReference>
<dbReference type="CCDS" id="CCDS3191.1"/>
<dbReference type="PIR" id="JC5505">
    <property type="entry name" value="JC5505"/>
</dbReference>
<dbReference type="RefSeq" id="NP_002259.1">
    <property type="nucleotide sequence ID" value="NM_002268.5"/>
</dbReference>
<dbReference type="PDB" id="4UAE">
    <property type="method" value="X-ray"/>
    <property type="resolution" value="2.70 A"/>
    <property type="chains" value="A=68-487"/>
</dbReference>
<dbReference type="PDB" id="5TBK">
    <property type="method" value="X-ray"/>
    <property type="resolution" value="3.45 A"/>
    <property type="chains" value="A/B/C/D/E/F/G/H=1-521"/>
</dbReference>
<dbReference type="PDB" id="5XZX">
    <property type="method" value="X-ray"/>
    <property type="resolution" value="3.00 A"/>
    <property type="chains" value="A=70-485"/>
</dbReference>
<dbReference type="PDB" id="6BVV">
    <property type="method" value="X-ray"/>
    <property type="resolution" value="2.30 A"/>
    <property type="chains" value="A=64-521"/>
</dbReference>
<dbReference type="PDB" id="6BVZ">
    <property type="method" value="X-ray"/>
    <property type="resolution" value="2.30 A"/>
    <property type="chains" value="A=64-521"/>
</dbReference>
<dbReference type="PDB" id="6BW9">
    <property type="method" value="X-ray"/>
    <property type="resolution" value="1.60 A"/>
    <property type="chains" value="A=64-521"/>
</dbReference>
<dbReference type="PDB" id="6BWA">
    <property type="method" value="X-ray"/>
    <property type="resolution" value="2.20 A"/>
    <property type="chains" value="A=64-521"/>
</dbReference>
<dbReference type="PDB" id="6BWB">
    <property type="method" value="X-ray"/>
    <property type="resolution" value="2.30 A"/>
    <property type="chains" value="A=64-521"/>
</dbReference>
<dbReference type="PDB" id="6WX8">
    <property type="method" value="X-ray"/>
    <property type="resolution" value="2.30 A"/>
    <property type="chains" value="A/C=64-521"/>
</dbReference>
<dbReference type="PDB" id="7JJL">
    <property type="method" value="X-ray"/>
    <property type="resolution" value="2.60 A"/>
    <property type="chains" value="A=64-521"/>
</dbReference>
<dbReference type="PDB" id="7LF4">
    <property type="method" value="X-ray"/>
    <property type="resolution" value="2.85 A"/>
    <property type="chains" value="A/C=1-521"/>
</dbReference>
<dbReference type="PDB" id="7LFC">
    <property type="method" value="X-ray"/>
    <property type="resolution" value="2.10 A"/>
    <property type="chains" value="A=1-521"/>
</dbReference>
<dbReference type="PDB" id="7RFY">
    <property type="method" value="X-ray"/>
    <property type="resolution" value="2.50 A"/>
    <property type="chains" value="A=64-521"/>
</dbReference>
<dbReference type="PDB" id="7RG5">
    <property type="method" value="X-ray"/>
    <property type="resolution" value="2.15 A"/>
    <property type="chains" value="A=64-521"/>
</dbReference>
<dbReference type="PDB" id="8FUB">
    <property type="method" value="X-ray"/>
    <property type="resolution" value="2.75 A"/>
    <property type="chains" value="A=64-521"/>
</dbReference>
<dbReference type="PDB" id="8FZM">
    <property type="method" value="X-ray"/>
    <property type="resolution" value="3.00 A"/>
    <property type="chains" value="A/C=64-521"/>
</dbReference>
<dbReference type="PDB" id="8HKW">
    <property type="method" value="X-ray"/>
    <property type="resolution" value="1.90 A"/>
    <property type="chains" value="A/B=70-485"/>
</dbReference>
<dbReference type="PDBsum" id="4UAE"/>
<dbReference type="PDBsum" id="5TBK"/>
<dbReference type="PDBsum" id="5XZX"/>
<dbReference type="PDBsum" id="6BVV"/>
<dbReference type="PDBsum" id="6BVZ"/>
<dbReference type="PDBsum" id="6BW9"/>
<dbReference type="PDBsum" id="6BWA"/>
<dbReference type="PDBsum" id="6BWB"/>
<dbReference type="PDBsum" id="6WX8"/>
<dbReference type="PDBsum" id="7JJL"/>
<dbReference type="PDBsum" id="7LF4"/>
<dbReference type="PDBsum" id="7LFC"/>
<dbReference type="PDBsum" id="7RFY"/>
<dbReference type="PDBsum" id="7RG5"/>
<dbReference type="PDBsum" id="8FUB"/>
<dbReference type="PDBsum" id="8FZM"/>
<dbReference type="PDBsum" id="8HKW"/>
<dbReference type="SMR" id="O00629"/>
<dbReference type="BioGRID" id="110038">
    <property type="interactions" value="239"/>
</dbReference>
<dbReference type="ComplexPortal" id="CPX-1060">
    <property type="entry name" value="Importin complex, KPNA4 variant"/>
</dbReference>
<dbReference type="CORUM" id="O00629"/>
<dbReference type="DIP" id="DIP-32982N"/>
<dbReference type="FunCoup" id="O00629">
    <property type="interactions" value="3820"/>
</dbReference>
<dbReference type="IntAct" id="O00629">
    <property type="interactions" value="175"/>
</dbReference>
<dbReference type="MINT" id="O00629"/>
<dbReference type="STRING" id="9606.ENSP00000334373"/>
<dbReference type="TCDB" id="1.I.1.1.3">
    <property type="family name" value="the nuclear pore complex (npc) family"/>
</dbReference>
<dbReference type="GlyGen" id="O00629">
    <property type="glycosylation" value="1 site, 1 O-linked glycan (1 site)"/>
</dbReference>
<dbReference type="iPTMnet" id="O00629"/>
<dbReference type="MetOSite" id="O00629"/>
<dbReference type="PhosphoSitePlus" id="O00629"/>
<dbReference type="SwissPalm" id="O00629"/>
<dbReference type="BioMuta" id="KPNA4"/>
<dbReference type="jPOST" id="O00629"/>
<dbReference type="MassIVE" id="O00629"/>
<dbReference type="PaxDb" id="9606-ENSP00000334373"/>
<dbReference type="PeptideAtlas" id="O00629"/>
<dbReference type="ProteomicsDB" id="48002"/>
<dbReference type="Pumba" id="O00629"/>
<dbReference type="TopDownProteomics" id="O00629"/>
<dbReference type="Antibodypedia" id="18521">
    <property type="antibodies" value="339 antibodies from 39 providers"/>
</dbReference>
<dbReference type="DNASU" id="3840"/>
<dbReference type="Ensembl" id="ENST00000334256.9">
    <property type="protein sequence ID" value="ENSP00000334373.4"/>
    <property type="gene ID" value="ENSG00000186432.10"/>
</dbReference>
<dbReference type="GeneID" id="3840"/>
<dbReference type="KEGG" id="hsa:3840"/>
<dbReference type="MANE-Select" id="ENST00000334256.9">
    <property type="protein sequence ID" value="ENSP00000334373.4"/>
    <property type="RefSeq nucleotide sequence ID" value="NM_002268.5"/>
    <property type="RefSeq protein sequence ID" value="NP_002259.1"/>
</dbReference>
<dbReference type="UCSC" id="uc003fdn.3">
    <property type="organism name" value="human"/>
</dbReference>
<dbReference type="AGR" id="HGNC:6397"/>
<dbReference type="CTD" id="3840"/>
<dbReference type="DisGeNET" id="3840"/>
<dbReference type="GeneCards" id="KPNA4"/>
<dbReference type="HGNC" id="HGNC:6397">
    <property type="gene designation" value="KPNA4"/>
</dbReference>
<dbReference type="HPA" id="ENSG00000186432">
    <property type="expression patterns" value="Tissue enhanced (skeletal)"/>
</dbReference>
<dbReference type="MIM" id="602970">
    <property type="type" value="gene"/>
</dbReference>
<dbReference type="neXtProt" id="NX_O00629"/>
<dbReference type="OpenTargets" id="ENSG00000186432"/>
<dbReference type="PharmGKB" id="PA30188"/>
<dbReference type="VEuPathDB" id="HostDB:ENSG00000186432"/>
<dbReference type="eggNOG" id="KOG0166">
    <property type="taxonomic scope" value="Eukaryota"/>
</dbReference>
<dbReference type="GeneTree" id="ENSGT01050000244891"/>
<dbReference type="HOGENOM" id="CLU_018084_6_1_1"/>
<dbReference type="InParanoid" id="O00629"/>
<dbReference type="OMA" id="IPRDGFN"/>
<dbReference type="OrthoDB" id="29145at2759"/>
<dbReference type="PAN-GO" id="O00629">
    <property type="GO annotations" value="5 GO annotations based on evolutionary models"/>
</dbReference>
<dbReference type="PhylomeDB" id="O00629"/>
<dbReference type="TreeFam" id="TF101178"/>
<dbReference type="PathwayCommons" id="O00629"/>
<dbReference type="Reactome" id="R-HSA-1169408">
    <property type="pathway name" value="ISG15 antiviral mechanism"/>
</dbReference>
<dbReference type="Reactome" id="R-HSA-168276">
    <property type="pathway name" value="NS1 Mediated Effects on Host Pathways"/>
</dbReference>
<dbReference type="SignaLink" id="O00629"/>
<dbReference type="SIGNOR" id="O00629"/>
<dbReference type="BioGRID-ORCS" id="3840">
    <property type="hits" value="103 hits in 1152 CRISPR screens"/>
</dbReference>
<dbReference type="CD-CODE" id="91857CE7">
    <property type="entry name" value="Nucleolus"/>
</dbReference>
<dbReference type="CD-CODE" id="DEE660B4">
    <property type="entry name" value="Stress granule"/>
</dbReference>
<dbReference type="ChiTaRS" id="KPNA4">
    <property type="organism name" value="human"/>
</dbReference>
<dbReference type="EvolutionaryTrace" id="O00629"/>
<dbReference type="GeneWiki" id="KPNA4"/>
<dbReference type="GenomeRNAi" id="3840"/>
<dbReference type="Pharos" id="O00629">
    <property type="development level" value="Tbio"/>
</dbReference>
<dbReference type="PRO" id="PR:O00629"/>
<dbReference type="Proteomes" id="UP000005640">
    <property type="component" value="Chromosome 3"/>
</dbReference>
<dbReference type="RNAct" id="O00629">
    <property type="molecule type" value="protein"/>
</dbReference>
<dbReference type="Bgee" id="ENSG00000186432">
    <property type="expression patterns" value="Expressed in biceps brachii and 208 other cell types or tissues"/>
</dbReference>
<dbReference type="ExpressionAtlas" id="O00629">
    <property type="expression patterns" value="baseline and differential"/>
</dbReference>
<dbReference type="GO" id="GO:0005737">
    <property type="term" value="C:cytoplasm"/>
    <property type="evidence" value="ECO:0000314"/>
    <property type="project" value="UniProt"/>
</dbReference>
<dbReference type="GO" id="GO:0005829">
    <property type="term" value="C:cytosol"/>
    <property type="evidence" value="ECO:0000304"/>
    <property type="project" value="Reactome"/>
</dbReference>
<dbReference type="GO" id="GO:0001673">
    <property type="term" value="C:male germ cell nucleus"/>
    <property type="evidence" value="ECO:0007669"/>
    <property type="project" value="Ensembl"/>
</dbReference>
<dbReference type="GO" id="GO:0042564">
    <property type="term" value="C:NLS-dependent protein nuclear import complex"/>
    <property type="evidence" value="ECO:0000353"/>
    <property type="project" value="ComplexPortal"/>
</dbReference>
<dbReference type="GO" id="GO:0031965">
    <property type="term" value="C:nuclear membrane"/>
    <property type="evidence" value="ECO:0000314"/>
    <property type="project" value="HPA"/>
</dbReference>
<dbReference type="GO" id="GO:0005643">
    <property type="term" value="C:nuclear pore"/>
    <property type="evidence" value="ECO:0000314"/>
    <property type="project" value="UniProt"/>
</dbReference>
<dbReference type="GO" id="GO:0005654">
    <property type="term" value="C:nucleoplasm"/>
    <property type="evidence" value="ECO:0000314"/>
    <property type="project" value="HPA"/>
</dbReference>
<dbReference type="GO" id="GO:0005634">
    <property type="term" value="C:nucleus"/>
    <property type="evidence" value="ECO:0000318"/>
    <property type="project" value="GO_Central"/>
</dbReference>
<dbReference type="GO" id="GO:0061608">
    <property type="term" value="F:nuclear import signal receptor activity"/>
    <property type="evidence" value="ECO:0000314"/>
    <property type="project" value="UniProt"/>
</dbReference>
<dbReference type="GO" id="GO:0008139">
    <property type="term" value="F:nuclear localization sequence binding"/>
    <property type="evidence" value="ECO:0000314"/>
    <property type="project" value="UniProtKB"/>
</dbReference>
<dbReference type="GO" id="GO:0014046">
    <property type="term" value="P:dopamine secretion"/>
    <property type="evidence" value="ECO:0000314"/>
    <property type="project" value="UniProt"/>
</dbReference>
<dbReference type="GO" id="GO:0010467">
    <property type="term" value="P:gene expression"/>
    <property type="evidence" value="ECO:0000314"/>
    <property type="project" value="UniProt"/>
</dbReference>
<dbReference type="GO" id="GO:0006607">
    <property type="term" value="P:NLS-bearing protein import into nucleus"/>
    <property type="evidence" value="ECO:0000314"/>
    <property type="project" value="UniProtKB"/>
</dbReference>
<dbReference type="GO" id="GO:0006606">
    <property type="term" value="P:protein import into nucleus"/>
    <property type="evidence" value="ECO:0000314"/>
    <property type="project" value="ComplexPortal"/>
</dbReference>
<dbReference type="GO" id="GO:0042542">
    <property type="term" value="P:response to hydrogen peroxide"/>
    <property type="evidence" value="ECO:0007669"/>
    <property type="project" value="Ensembl"/>
</dbReference>
<dbReference type="FunFam" id="1.20.5.690:FF:000004">
    <property type="entry name" value="Importin subunit alpha"/>
    <property type="match status" value="1"/>
</dbReference>
<dbReference type="FunFam" id="1.25.10.10:FF:000009">
    <property type="entry name" value="Importin subunit alpha"/>
    <property type="match status" value="1"/>
</dbReference>
<dbReference type="Gene3D" id="1.20.5.690">
    <property type="entry name" value="Importin-alpha, importin-beta-binding domain"/>
    <property type="match status" value="1"/>
</dbReference>
<dbReference type="Gene3D" id="1.25.10.10">
    <property type="entry name" value="Leucine-rich Repeat Variant"/>
    <property type="match status" value="1"/>
</dbReference>
<dbReference type="InterPro" id="IPR011989">
    <property type="entry name" value="ARM-like"/>
</dbReference>
<dbReference type="InterPro" id="IPR016024">
    <property type="entry name" value="ARM-type_fold"/>
</dbReference>
<dbReference type="InterPro" id="IPR032413">
    <property type="entry name" value="Arm_3"/>
</dbReference>
<dbReference type="InterPro" id="IPR000225">
    <property type="entry name" value="Armadillo"/>
</dbReference>
<dbReference type="InterPro" id="IPR002652">
    <property type="entry name" value="Importin-a_IBB"/>
</dbReference>
<dbReference type="InterPro" id="IPR036975">
    <property type="entry name" value="Importin-a_IBB_sf"/>
</dbReference>
<dbReference type="InterPro" id="IPR024931">
    <property type="entry name" value="Importin_alpha"/>
</dbReference>
<dbReference type="PANTHER" id="PTHR23316">
    <property type="entry name" value="IMPORTIN ALPHA"/>
    <property type="match status" value="1"/>
</dbReference>
<dbReference type="Pfam" id="PF00514">
    <property type="entry name" value="Arm"/>
    <property type="match status" value="8"/>
</dbReference>
<dbReference type="Pfam" id="PF16186">
    <property type="entry name" value="Arm_3"/>
    <property type="match status" value="1"/>
</dbReference>
<dbReference type="Pfam" id="PF01749">
    <property type="entry name" value="IBB"/>
    <property type="match status" value="1"/>
</dbReference>
<dbReference type="PIRSF" id="PIRSF005673">
    <property type="entry name" value="Importin_alpha"/>
    <property type="match status" value="1"/>
</dbReference>
<dbReference type="SMART" id="SM00185">
    <property type="entry name" value="ARM"/>
    <property type="match status" value="8"/>
</dbReference>
<dbReference type="SUPFAM" id="SSF48371">
    <property type="entry name" value="ARM repeat"/>
    <property type="match status" value="1"/>
</dbReference>
<dbReference type="PROSITE" id="PS50176">
    <property type="entry name" value="ARM_REPEAT"/>
    <property type="match status" value="3"/>
</dbReference>
<dbReference type="PROSITE" id="PS51214">
    <property type="entry name" value="IBB"/>
    <property type="match status" value="1"/>
</dbReference>